<comment type="function">
    <text evidence="2 3">E3 ubiquitin ligase that, together with UBE2N and UBE2V1, mediates the synthesis of 'Lys-63'-linked-polyubiquitin chains conjugated to proteins, such as ECSIT, IKBKG, IRAK1, AKT1 and AKT2. Also mediates ubiquitination of free/unanchored polyubiquitin chain that leads to MAP3K7 activation. Leads to the activation of NF-kappa-B and JUN (By similarity). Seems to also play a role in dendritic cells (DCs) maturation and/or activation (By similarity). Represses c-Myb-mediated transactivation, in B-lymphocytes. Adapter protein that seems to play a role in signal transduction initiated via TNF receptor, IL-1 receptor and IL-17 receptor (By similarity). Regulates osteoclast differentiation by mediating the activation of adapter protein complex 1 (AP-1) and NF-kappa-B, in response to RANK-L stimulation (By similarity). Together with MAP3K8, mediates CD40 signals that activate ERK in B-cells and macrophages, and thus may play a role in the regulation of immunoglobulin production (By similarity). Acts as a regulator of the JNK and NF-kappa-B signaling pathways by initiating assembly of heterotypic 'Lys-63'-/'Lys-48'-linked branched ubiquitin chains that are then recognized by TAB2: TRAF6 catalyzes initial 'Lys-63'-linked-polyubiquitin chains that are then branched via 'Lys-48'-linked polyubiquitin by HUWE1. 'Lys-63'-/'Lys-48'-linked branched ubiquitin chains protect 'Lys-63'-linkages from CYLD deubiquitination. Also participates in the TCR signaling by ubiquitinating LAT (By similarity).</text>
</comment>
<comment type="catalytic activity">
    <reaction evidence="3">
        <text>S-ubiquitinyl-[E2 ubiquitin-conjugating enzyme]-L-cysteine + [acceptor protein]-L-lysine = [E2 ubiquitin-conjugating enzyme]-L-cysteine + N(6)-ubiquitinyl-[acceptor protein]-L-lysine.</text>
        <dbReference type="EC" id="2.3.2.27"/>
    </reaction>
</comment>
<comment type="pathway">
    <text evidence="3">Protein modification; protein ubiquitination.</text>
</comment>
<comment type="subunit">
    <text evidence="2 3">Homotrimer. Homooligomer. N-terminal region is dimeric while C-terminal region is trimeric; maybe providing a mode of oligomerization. Upon IL1B treatment, forms a complex with PELI1, IRAK1, IRAK4 and MYD88; this complex recruits MAP3K7/TAK1, TAB1 and TAB2 to mediate NF-kappa-B activation. Direct binding of SMAD6 to PELI1 prevents the complex formation and hence negatively regulates IL1R-TLR signaling and eventually NF-kappa-B-mediated gene expression. Binds to TNFRSF5/CD40 and TNFRSF11A/RANK. Associates with NGFR, TNFRSF17, IRAK2, IRAK3, RIPK2, MAP3K1, MAP3K5, MAP3K14, CSK, TRAF, TRAF-interacting protein TRIP and TNF receptor associated protein TDP2. Interacts with IL17R. Interacts with SQSTM1 bridging NTRK1 and NGFR. Forms a ternary complex with SQSTM1 and PRKCZ (By similarity). Interacts with PELI2 and PELI3. Binds UBE2V1. Interacts with TAX1BP1; this interaction mediates deubiquitination of TRAF6 and inhibition of NF-kappa-B activation (By similarity). Interacts with ZNF675. Interacts with ARRB1 and ARRB2. Interacts with MAP3K7 and TAB1/MAP3K7IP1; during IL-1 signaling. Interacts with UBE2N. Interacts with TGFBR1, HDAC1 and RANGAP1. Interacts with AKT1, AKT2 and AKT3. Interacts (via TRAF domains) with NUMBL (via C-terminal). Interacts with RBCK1. Interacts with LIMD1 (via LIM domains) (By similarity). Interacts with RSAD2/viperin (By similarity). Interacts (via C-terminus) with EIF2AK2/PKR (via the kinase catalytic domain) (By similarity). Interacts with ZFAND5. Interacts with IL1RL1. Interacts with TRAFD1. Interacts with AJUBA. Interacts with MAVS/IPS1. Interacts (via TRAF domains) with DYNC2I2 (via WD domains). Interacts with IFIT3 (via N-terminus). Interacts with TICAM2. Interacts with CARD14. Interacts with CD40 and MAP3K8; the interaction is required for ERK activation (By similarity). Interacts with TICAM1 and this interaction is enhanced in the presence of WDFY1. Interacts with TANK; this interaction increases in response to DNA damage. Interacts with USP10; this interaction increases in response to DNA damage. Interacts with ZC3H12A; this interaction increases in response to DNA damage and is stimulated by TANK (By similarity). Interacts with WDFY3 (By similarity). Interacts with TRIM13 (By similarity). Interacts with GPS2 (By similarity). Interacts (via C-terminus) with SASH1. Interacts with LRRC19. Interacts with IL17RA and TRAF3IP2. Interacts with TOMM70. Interacts with AMBRA1; interaction is required to mediate 'Lys-63'-linked ubiquitination of ULK1 (By similarity). Interacts with CRBN; this interaction inhibits TLR4-mediated signaling by preventing TRAF6-mediated ubiquitination of ECSIT (By similarity).</text>
</comment>
<comment type="subcellular location">
    <subcellularLocation>
        <location evidence="3">Cytoplasm</location>
    </subcellularLocation>
    <subcellularLocation>
        <location evidence="3">Cytoplasm</location>
        <location evidence="3">Cell cortex</location>
    </subcellularLocation>
    <subcellularLocation>
        <location evidence="3">Nucleus</location>
    </subcellularLocation>
    <subcellularLocation>
        <location evidence="2">Lipid droplet</location>
    </subcellularLocation>
    <text evidence="2">RSAD2/viperin recruits it to the lipid droplet.</text>
</comment>
<comment type="domain">
    <text evidence="3">The coiled coil domain mediates homo- and hetero-oligomerization.</text>
</comment>
<comment type="domain">
    <text evidence="3">The MATH/TRAF domain binds to receptor cytoplasmic domains.</text>
</comment>
<comment type="PTM">
    <text evidence="3">Sumoylated on Lys-124, Lys-142 and Lys-461 with SUMO1.</text>
</comment>
<comment type="PTM">
    <text evidence="2 3">Polyubiquitinated on Lys-124 by TRAF3IP2; after cell stimulation with IL17A (By similarity). Polyubiquitinated; after cell stimulation with IL1B or TGFB. This ligand-induced cell stimulation leads to dimerization/oligomerization of TRAF6 molecules, followed by auto-ubiquitination which involves UBE2N and UBE2V1 and leads to TRAF6 activation. This 'Lys-63' site-specific poly-ubiquitination appears to be associated with the activation of signaling molecules. Endogenous autoubiquitination occurs only for the cytoplasmic form. Deubiquitinated by USP10 in a TANK-dependent manner, leading to the negative regulation of NF-kappa-B signaling upon DNA damage. LRRC19 induces 'Lys-63' ubiquitination (By similarity). Ubiquitinated at Lys-327 by the SCF(FBXL2) complex, leading to its degradation by the proteasome (By similarity).</text>
</comment>
<comment type="similarity">
    <text evidence="8">Belongs to the TNF receptor-associated factor family. A subfamily.</text>
</comment>
<accession>B5DF45</accession>
<sequence>MSLLNCENSCASSQSSSDCCAAMANSCSAAMKDDSVSGCVSTGNLSSSFMEEIQGYDVEFDPPLESKYECPICLMALREAVQTPCGHRFCKACITKSIRDAGHKCPVDNEILLENQLFPDNFAKREILSLTVKCPNKGCVQKMELRHLEDHQVHCEFALVICPQCQRFFQKCQINKHIIEDCPRRQVSCVNCAVPMPYEEKEIHDQSCPLANIICEYCGTILIREQMPNHYDLDCPTAPVPCTFSVFGCHEKMQRNHLARHLQENTQLHMRLLAQAVHNVNLSLRPCDASSPSRGCRPEDPNYEETVKQLEGRLVRQDHQIRELTAKMETQSMHVSELKRTIRSLEDKVAEMEAQQCNGIYIWKIGNFGMHLKSQEEERPVVIHSPGFYTGRPGYKLCMRLHLQLPTAQRCANYISLFVHTMQGEYDSHLPWPFQGTIRLTILDQSEAVIRQNHEEVMDAKPELLAFQRPTIPRNPKGFGYVTFMHLEALRQGTFIKDDTLLVRCEVSTRFDMGGLRKEGFQPRSTDAGV</sequence>
<keyword id="KW-0175">Coiled coil</keyword>
<keyword id="KW-0963">Cytoplasm</keyword>
<keyword id="KW-0227">DNA damage</keyword>
<keyword id="KW-0391">Immunity</keyword>
<keyword id="KW-1017">Isopeptide bond</keyword>
<keyword id="KW-0551">Lipid droplet</keyword>
<keyword id="KW-0479">Metal-binding</keyword>
<keyword id="KW-0539">Nucleus</keyword>
<keyword id="KW-0987">Osteopetrosis</keyword>
<keyword id="KW-1185">Reference proteome</keyword>
<keyword id="KW-0677">Repeat</keyword>
<keyword id="KW-0808">Transferase</keyword>
<keyword id="KW-0832">Ubl conjugation</keyword>
<keyword id="KW-0833">Ubl conjugation pathway</keyword>
<keyword id="KW-0862">Zinc</keyword>
<keyword id="KW-0863">Zinc-finger</keyword>
<evidence type="ECO:0000250" key="1"/>
<evidence type="ECO:0000250" key="2">
    <source>
        <dbReference type="UniProtKB" id="P70196"/>
    </source>
</evidence>
<evidence type="ECO:0000250" key="3">
    <source>
        <dbReference type="UniProtKB" id="Q9Y4K3"/>
    </source>
</evidence>
<evidence type="ECO:0000255" key="4"/>
<evidence type="ECO:0000255" key="5">
    <source>
        <dbReference type="PROSITE-ProRule" id="PRU00129"/>
    </source>
</evidence>
<evidence type="ECO:0000255" key="6">
    <source>
        <dbReference type="PROSITE-ProRule" id="PRU00175"/>
    </source>
</evidence>
<evidence type="ECO:0000255" key="7">
    <source>
        <dbReference type="PROSITE-ProRule" id="PRU00207"/>
    </source>
</evidence>
<evidence type="ECO:0000305" key="8"/>
<feature type="chain" id="PRO_0000391611" description="TNF receptor-associated factor 6">
    <location>
        <begin position="1"/>
        <end position="530"/>
    </location>
</feature>
<feature type="domain" description="MATH" evidence="5">
    <location>
        <begin position="358"/>
        <end position="507"/>
    </location>
</feature>
<feature type="zinc finger region" description="RING-type; degenerate" evidence="6">
    <location>
        <begin position="70"/>
        <end position="109"/>
    </location>
</feature>
<feature type="zinc finger region" description="TRAF-type 1" evidence="7">
    <location>
        <begin position="150"/>
        <end position="202"/>
    </location>
</feature>
<feature type="zinc finger region" description="TRAF-type 2" evidence="7">
    <location>
        <begin position="203"/>
        <end position="259"/>
    </location>
</feature>
<feature type="region of interest" description="Interaction with TAX1BP1" evidence="1">
    <location>
        <begin position="1"/>
        <end position="362"/>
    </location>
</feature>
<feature type="region of interest" description="Interaction with TANK" evidence="3">
    <location>
        <begin position="363"/>
        <end position="530"/>
    </location>
</feature>
<feature type="coiled-coil region" evidence="4">
    <location>
        <begin position="302"/>
        <end position="356"/>
    </location>
</feature>
<feature type="cross-link" description="Glycyl lysine isopeptide (Lys-Gly) (interchain with G-Cter in SUMO); alternate" evidence="1">
    <location>
        <position position="124"/>
    </location>
</feature>
<feature type="cross-link" description="Glycyl lysine isopeptide (Lys-Gly) (interchain with G-Cter in ubiquitin); alternate" evidence="3">
    <location>
        <position position="124"/>
    </location>
</feature>
<feature type="cross-link" description="Glycyl lysine isopeptide (Lys-Gly) (interchain with G-Cter in SUMO)" evidence="1">
    <location>
        <position position="142"/>
    </location>
</feature>
<feature type="cross-link" description="Glycyl lysine isopeptide (Lys-Gly) (interchain with G-Cter in ubiquitin)" evidence="2">
    <location>
        <position position="327"/>
    </location>
</feature>
<feature type="cross-link" description="Glycyl lysine isopeptide (Lys-Gly) (interchain with G-Cter in SUMO)" evidence="1">
    <location>
        <position position="461"/>
    </location>
</feature>
<name>TRAF6_RAT</name>
<proteinExistence type="evidence at transcript level"/>
<gene>
    <name type="primary">Traf6</name>
</gene>
<organism>
    <name type="scientific">Rattus norvegicus</name>
    <name type="common">Rat</name>
    <dbReference type="NCBI Taxonomy" id="10116"/>
    <lineage>
        <taxon>Eukaryota</taxon>
        <taxon>Metazoa</taxon>
        <taxon>Chordata</taxon>
        <taxon>Craniata</taxon>
        <taxon>Vertebrata</taxon>
        <taxon>Euteleostomi</taxon>
        <taxon>Mammalia</taxon>
        <taxon>Eutheria</taxon>
        <taxon>Euarchontoglires</taxon>
        <taxon>Glires</taxon>
        <taxon>Rodentia</taxon>
        <taxon>Myomorpha</taxon>
        <taxon>Muroidea</taxon>
        <taxon>Muridae</taxon>
        <taxon>Murinae</taxon>
        <taxon>Rattus</taxon>
    </lineage>
</organism>
<reference key="1">
    <citation type="submission" date="2005-07" db="EMBL/GenBank/DDBJ databases">
        <authorList>
            <person name="Mural R.J."/>
            <person name="Adams M.D."/>
            <person name="Myers E.W."/>
            <person name="Smith H.O."/>
            <person name="Venter J.C."/>
        </authorList>
    </citation>
    <scope>NUCLEOTIDE SEQUENCE [LARGE SCALE GENOMIC DNA]</scope>
    <source>
        <strain>Brown Norway</strain>
    </source>
</reference>
<reference key="2">
    <citation type="journal article" date="2004" name="Genome Res.">
        <title>The status, quality, and expansion of the NIH full-length cDNA project: the Mammalian Gene Collection (MGC).</title>
        <authorList>
            <consortium name="The MGC Project Team"/>
        </authorList>
    </citation>
    <scope>NUCLEOTIDE SEQUENCE [LARGE SCALE MRNA]</scope>
    <source>
        <tissue>Kidney</tissue>
    </source>
</reference>
<protein>
    <recommendedName>
        <fullName>TNF receptor-associated factor 6</fullName>
        <ecNumber evidence="3">2.3.2.27</ecNumber>
    </recommendedName>
    <alternativeName>
        <fullName>E3 ubiquitin-protein ligase TRAF6</fullName>
    </alternativeName>
    <alternativeName>
        <fullName evidence="8">RING-type E3 ubiquitin transferase TRAF6</fullName>
    </alternativeName>
</protein>
<dbReference type="EC" id="2.3.2.27" evidence="3"/>
<dbReference type="EMBL" id="CH473949">
    <property type="protein sequence ID" value="EDL79625.1"/>
    <property type="molecule type" value="Genomic_DNA"/>
</dbReference>
<dbReference type="EMBL" id="BC168921">
    <property type="protein sequence ID" value="AAI68921.1"/>
    <property type="molecule type" value="mRNA"/>
</dbReference>
<dbReference type="RefSeq" id="NP_001101224.1">
    <property type="nucleotide sequence ID" value="NM_001107754.2"/>
</dbReference>
<dbReference type="RefSeq" id="XP_038960852.1">
    <property type="nucleotide sequence ID" value="XM_039104924.2"/>
</dbReference>
<dbReference type="SMR" id="B5DF45"/>
<dbReference type="BioGRID" id="259875">
    <property type="interactions" value="10"/>
</dbReference>
<dbReference type="FunCoup" id="B5DF45">
    <property type="interactions" value="3815"/>
</dbReference>
<dbReference type="STRING" id="10116.ENSRNOP00000006148"/>
<dbReference type="PhosphoSitePlus" id="B5DF45"/>
<dbReference type="PaxDb" id="10116-ENSRNOP00000006148"/>
<dbReference type="PeptideAtlas" id="B5DF45"/>
<dbReference type="Ensembl" id="ENSRNOT00000006148.6">
    <property type="protein sequence ID" value="ENSRNOP00000006148.4"/>
    <property type="gene ID" value="ENSRNOG00000004639.6"/>
</dbReference>
<dbReference type="GeneID" id="311245"/>
<dbReference type="KEGG" id="rno:311245"/>
<dbReference type="UCSC" id="RGD:1306853">
    <property type="organism name" value="rat"/>
</dbReference>
<dbReference type="AGR" id="RGD:1306853"/>
<dbReference type="CTD" id="7189"/>
<dbReference type="RGD" id="1306853">
    <property type="gene designation" value="Traf6"/>
</dbReference>
<dbReference type="eggNOG" id="KOG0297">
    <property type="taxonomic scope" value="Eukaryota"/>
</dbReference>
<dbReference type="GeneTree" id="ENSGT00940000155426"/>
<dbReference type="HOGENOM" id="CLU_021061_5_0_1"/>
<dbReference type="InParanoid" id="B5DF45"/>
<dbReference type="OrthoDB" id="11611at9989"/>
<dbReference type="PhylomeDB" id="B5DF45"/>
<dbReference type="TreeFam" id="TF321154"/>
<dbReference type="Reactome" id="R-RNO-1257604">
    <property type="pathway name" value="PIP3 activates AKT signaling"/>
</dbReference>
<dbReference type="Reactome" id="R-RNO-166058">
    <property type="pathway name" value="MyD88:MAL(TIRAP) cascade initiated on plasma membrane"/>
</dbReference>
<dbReference type="Reactome" id="R-RNO-202424">
    <property type="pathway name" value="Downstream TCR signaling"/>
</dbReference>
<dbReference type="Reactome" id="R-RNO-205043">
    <property type="pathway name" value="NRIF signals cell death from the nucleus"/>
</dbReference>
<dbReference type="Reactome" id="R-RNO-209543">
    <property type="pathway name" value="p75NTR recruits signalling complexes"/>
</dbReference>
<dbReference type="Reactome" id="R-RNO-209560">
    <property type="pathway name" value="NF-kB is activated and signals survival"/>
</dbReference>
<dbReference type="Reactome" id="R-RNO-2871837">
    <property type="pathway name" value="FCERI mediated NF-kB activation"/>
</dbReference>
<dbReference type="Reactome" id="R-RNO-450302">
    <property type="pathway name" value="activated TAK1 mediates p38 MAPK activation"/>
</dbReference>
<dbReference type="Reactome" id="R-RNO-450321">
    <property type="pathway name" value="JNK (c-Jun kinases) phosphorylation and activation mediated by activated human TAK1"/>
</dbReference>
<dbReference type="Reactome" id="R-RNO-5607764">
    <property type="pathway name" value="CLEC7A (Dectin-1) signaling"/>
</dbReference>
<dbReference type="Reactome" id="R-RNO-5689880">
    <property type="pathway name" value="Ub-specific processing proteases"/>
</dbReference>
<dbReference type="Reactome" id="R-RNO-5689896">
    <property type="pathway name" value="Ovarian tumor domain proteases"/>
</dbReference>
<dbReference type="Reactome" id="R-RNO-6811558">
    <property type="pathway name" value="PI5P, PP2A and IER3 Regulate PI3K/AKT Signaling"/>
</dbReference>
<dbReference type="Reactome" id="R-RNO-9020702">
    <property type="pathway name" value="Interleukin-1 signaling"/>
</dbReference>
<dbReference type="Reactome" id="R-RNO-937039">
    <property type="pathway name" value="IRAK1 recruits IKK complex"/>
</dbReference>
<dbReference type="Reactome" id="R-RNO-937042">
    <property type="pathway name" value="IRAK2 mediated activation of TAK1 complex"/>
</dbReference>
<dbReference type="Reactome" id="R-RNO-937072">
    <property type="pathway name" value="TRAF6-mediated induction of TAK1 complex within TLR4 complex"/>
</dbReference>
<dbReference type="Reactome" id="R-RNO-9645460">
    <property type="pathway name" value="Alpha-protein kinase 1 signaling pathway"/>
</dbReference>
<dbReference type="Reactome" id="R-RNO-975138">
    <property type="pathway name" value="TRAF6 mediated induction of NFkB and MAP kinases upon TLR7/8 or 9 activation"/>
</dbReference>
<dbReference type="Reactome" id="R-RNO-975144">
    <property type="pathway name" value="IRAK1 recruits IKK complex upon TLR7/8 or 9 stimulation"/>
</dbReference>
<dbReference type="Reactome" id="R-RNO-975163">
    <property type="pathway name" value="IRAK2 mediated activation of TAK1 complex upon TLR7/8 or 9 stimulation"/>
</dbReference>
<dbReference type="Reactome" id="R-RNO-9758274">
    <property type="pathway name" value="Regulation of NF-kappa B signaling"/>
</dbReference>
<dbReference type="Reactome" id="R-RNO-975871">
    <property type="pathway name" value="MyD88 cascade initiated on plasma membrane"/>
</dbReference>
<dbReference type="UniPathway" id="UPA00143"/>
<dbReference type="PRO" id="PR:B5DF45"/>
<dbReference type="Proteomes" id="UP000002494">
    <property type="component" value="Chromosome 3"/>
</dbReference>
<dbReference type="Proteomes" id="UP000234681">
    <property type="component" value="Chromosome 3"/>
</dbReference>
<dbReference type="Bgee" id="ENSRNOG00000004639">
    <property type="expression patterns" value="Expressed in jejunum and 18 other cell types or tissues"/>
</dbReference>
<dbReference type="GO" id="GO:0035631">
    <property type="term" value="C:CD40 receptor complex"/>
    <property type="evidence" value="ECO:0000266"/>
    <property type="project" value="RGD"/>
</dbReference>
<dbReference type="GO" id="GO:0005938">
    <property type="term" value="C:cell cortex"/>
    <property type="evidence" value="ECO:0007669"/>
    <property type="project" value="UniProtKB-SubCell"/>
</dbReference>
<dbReference type="GO" id="GO:0005737">
    <property type="term" value="C:cytoplasm"/>
    <property type="evidence" value="ECO:0000266"/>
    <property type="project" value="RGD"/>
</dbReference>
<dbReference type="GO" id="GO:0009898">
    <property type="term" value="C:cytoplasmic side of plasma membrane"/>
    <property type="evidence" value="ECO:0000266"/>
    <property type="project" value="RGD"/>
</dbReference>
<dbReference type="GO" id="GO:0005829">
    <property type="term" value="C:cytosol"/>
    <property type="evidence" value="ECO:0000266"/>
    <property type="project" value="RGD"/>
</dbReference>
<dbReference type="GO" id="GO:0098978">
    <property type="term" value="C:glutamatergic synapse"/>
    <property type="evidence" value="ECO:0000314"/>
    <property type="project" value="SynGO"/>
</dbReference>
<dbReference type="GO" id="GO:0005811">
    <property type="term" value="C:lipid droplet"/>
    <property type="evidence" value="ECO:0000250"/>
    <property type="project" value="UniProtKB"/>
</dbReference>
<dbReference type="GO" id="GO:0005634">
    <property type="term" value="C:nucleus"/>
    <property type="evidence" value="ECO:0000266"/>
    <property type="project" value="RGD"/>
</dbReference>
<dbReference type="GO" id="GO:0048471">
    <property type="term" value="C:perinuclear region of cytoplasm"/>
    <property type="evidence" value="ECO:0000266"/>
    <property type="project" value="RGD"/>
</dbReference>
<dbReference type="GO" id="GO:0005886">
    <property type="term" value="C:plasma membrane"/>
    <property type="evidence" value="ECO:0000266"/>
    <property type="project" value="RGD"/>
</dbReference>
<dbReference type="GO" id="GO:0098794">
    <property type="term" value="C:postsynapse"/>
    <property type="evidence" value="ECO:0000314"/>
    <property type="project" value="SynGO"/>
</dbReference>
<dbReference type="GO" id="GO:0032991">
    <property type="term" value="C:protein-containing complex"/>
    <property type="evidence" value="ECO:0000314"/>
    <property type="project" value="RGD"/>
</dbReference>
<dbReference type="GO" id="GO:0042826">
    <property type="term" value="F:histone deacetylase binding"/>
    <property type="evidence" value="ECO:0000266"/>
    <property type="project" value="RGD"/>
</dbReference>
<dbReference type="GO" id="GO:0042802">
    <property type="term" value="F:identical protein binding"/>
    <property type="evidence" value="ECO:0000266"/>
    <property type="project" value="RGD"/>
</dbReference>
<dbReference type="GO" id="GO:0043422">
    <property type="term" value="F:protein kinase B binding"/>
    <property type="evidence" value="ECO:0000266"/>
    <property type="project" value="RGD"/>
</dbReference>
<dbReference type="GO" id="GO:0030674">
    <property type="term" value="F:protein-macromolecule adaptor activity"/>
    <property type="evidence" value="ECO:0000266"/>
    <property type="project" value="RGD"/>
</dbReference>
<dbReference type="GO" id="GO:0035591">
    <property type="term" value="F:signaling adaptor activity"/>
    <property type="evidence" value="ECO:0000318"/>
    <property type="project" value="GO_Central"/>
</dbReference>
<dbReference type="GO" id="GO:0005164">
    <property type="term" value="F:tumor necrosis factor receptor binding"/>
    <property type="evidence" value="ECO:0007669"/>
    <property type="project" value="InterPro"/>
</dbReference>
<dbReference type="GO" id="GO:0031624">
    <property type="term" value="F:ubiquitin conjugating enzyme binding"/>
    <property type="evidence" value="ECO:0000266"/>
    <property type="project" value="RGD"/>
</dbReference>
<dbReference type="GO" id="GO:0061630">
    <property type="term" value="F:ubiquitin protein ligase activity"/>
    <property type="evidence" value="ECO:0000266"/>
    <property type="project" value="RGD"/>
</dbReference>
<dbReference type="GO" id="GO:0004842">
    <property type="term" value="F:ubiquitin-protein transferase activity"/>
    <property type="evidence" value="ECO:0000250"/>
    <property type="project" value="UniProtKB"/>
</dbReference>
<dbReference type="GO" id="GO:0034450">
    <property type="term" value="F:ubiquitin-ubiquitin ligase activity"/>
    <property type="evidence" value="ECO:0000266"/>
    <property type="project" value="RGD"/>
</dbReference>
<dbReference type="GO" id="GO:0008270">
    <property type="term" value="F:zinc ion binding"/>
    <property type="evidence" value="ECO:0007669"/>
    <property type="project" value="UniProtKB-KW"/>
</dbReference>
<dbReference type="GO" id="GO:0009887">
    <property type="term" value="P:animal organ morphogenesis"/>
    <property type="evidence" value="ECO:0000266"/>
    <property type="project" value="RGD"/>
</dbReference>
<dbReference type="GO" id="GO:0019886">
    <property type="term" value="P:antigen processing and presentation of exogenous peptide antigen via MHC class II"/>
    <property type="evidence" value="ECO:0000266"/>
    <property type="project" value="RGD"/>
</dbReference>
<dbReference type="GO" id="GO:0140374">
    <property type="term" value="P:antiviral innate immune response"/>
    <property type="evidence" value="ECO:0000266"/>
    <property type="project" value="RGD"/>
</dbReference>
<dbReference type="GO" id="GO:0000045">
    <property type="term" value="P:autophagosome assembly"/>
    <property type="evidence" value="ECO:0000266"/>
    <property type="project" value="RGD"/>
</dbReference>
<dbReference type="GO" id="GO:0046849">
    <property type="term" value="P:bone remodeling"/>
    <property type="evidence" value="ECO:0000266"/>
    <property type="project" value="RGD"/>
</dbReference>
<dbReference type="GO" id="GO:0045453">
    <property type="term" value="P:bone resorption"/>
    <property type="evidence" value="ECO:0000266"/>
    <property type="project" value="RGD"/>
</dbReference>
<dbReference type="GO" id="GO:0007249">
    <property type="term" value="P:canonical NF-kappaB signal transduction"/>
    <property type="evidence" value="ECO:0000266"/>
    <property type="project" value="RGD"/>
</dbReference>
<dbReference type="GO" id="GO:0023035">
    <property type="term" value="P:CD40 signaling pathway"/>
    <property type="evidence" value="ECO:0000266"/>
    <property type="project" value="RGD"/>
</dbReference>
<dbReference type="GO" id="GO:0048468">
    <property type="term" value="P:cell development"/>
    <property type="evidence" value="ECO:0000266"/>
    <property type="project" value="RGD"/>
</dbReference>
<dbReference type="GO" id="GO:1904385">
    <property type="term" value="P:cellular response to angiotensin"/>
    <property type="evidence" value="ECO:0000270"/>
    <property type="project" value="RGD"/>
</dbReference>
<dbReference type="GO" id="GO:0071345">
    <property type="term" value="P:cellular response to cytokine stimulus"/>
    <property type="evidence" value="ECO:0000266"/>
    <property type="project" value="RGD"/>
</dbReference>
<dbReference type="GO" id="GO:0070301">
    <property type="term" value="P:cellular response to hydrogen peroxide"/>
    <property type="evidence" value="ECO:0000270"/>
    <property type="project" value="RGD"/>
</dbReference>
<dbReference type="GO" id="GO:0071222">
    <property type="term" value="P:cellular response to lipopolysaccharide"/>
    <property type="evidence" value="ECO:0000266"/>
    <property type="project" value="RGD"/>
</dbReference>
<dbReference type="GO" id="GO:0019221">
    <property type="term" value="P:cytokine-mediated signaling pathway"/>
    <property type="evidence" value="ECO:0000315"/>
    <property type="project" value="RGD"/>
</dbReference>
<dbReference type="GO" id="GO:0002753">
    <property type="term" value="P:cytoplasmic pattern recognition receptor signaling pathway"/>
    <property type="evidence" value="ECO:0000266"/>
    <property type="project" value="RGD"/>
</dbReference>
<dbReference type="GO" id="GO:0006974">
    <property type="term" value="P:DNA damage response"/>
    <property type="evidence" value="ECO:0007669"/>
    <property type="project" value="UniProtKB-KW"/>
</dbReference>
<dbReference type="GO" id="GO:0006955">
    <property type="term" value="P:immune response"/>
    <property type="evidence" value="ECO:0000266"/>
    <property type="project" value="RGD"/>
</dbReference>
<dbReference type="GO" id="GO:0001701">
    <property type="term" value="P:in utero embryonic development"/>
    <property type="evidence" value="ECO:0000266"/>
    <property type="project" value="RGD"/>
</dbReference>
<dbReference type="GO" id="GO:0045087">
    <property type="term" value="P:innate immune response"/>
    <property type="evidence" value="ECO:0000318"/>
    <property type="project" value="GO_Central"/>
</dbReference>
<dbReference type="GO" id="GO:0070498">
    <property type="term" value="P:interleukin-1-mediated signaling pathway"/>
    <property type="evidence" value="ECO:0000315"/>
    <property type="project" value="RGD"/>
</dbReference>
<dbReference type="GO" id="GO:0097400">
    <property type="term" value="P:interleukin-17-mediated signaling pathway"/>
    <property type="evidence" value="ECO:0000266"/>
    <property type="project" value="RGD"/>
</dbReference>
<dbReference type="GO" id="GO:0038173">
    <property type="term" value="P:interleukin-17A-mediated signaling pathway"/>
    <property type="evidence" value="ECO:0000266"/>
    <property type="project" value="RGD"/>
</dbReference>
<dbReference type="GO" id="GO:0038172">
    <property type="term" value="P:interleukin-33-mediated signaling pathway"/>
    <property type="evidence" value="ECO:0000266"/>
    <property type="project" value="RGD"/>
</dbReference>
<dbReference type="GO" id="GO:0007254">
    <property type="term" value="P:JNK cascade"/>
    <property type="evidence" value="ECO:0000315"/>
    <property type="project" value="RGD"/>
</dbReference>
<dbReference type="GO" id="GO:0031663">
    <property type="term" value="P:lipopolysaccharide-mediated signaling pathway"/>
    <property type="evidence" value="ECO:0000266"/>
    <property type="project" value="RGD"/>
</dbReference>
<dbReference type="GO" id="GO:0043011">
    <property type="term" value="P:myeloid dendritic cell differentiation"/>
    <property type="evidence" value="ECO:0000266"/>
    <property type="project" value="RGD"/>
</dbReference>
<dbReference type="GO" id="GO:0045892">
    <property type="term" value="P:negative regulation of DNA-templated transcription"/>
    <property type="evidence" value="ECO:0000266"/>
    <property type="project" value="RGD"/>
</dbReference>
<dbReference type="GO" id="GO:0000122">
    <property type="term" value="P:negative regulation of transcription by RNA polymerase II"/>
    <property type="evidence" value="ECO:0000266"/>
    <property type="project" value="RGD"/>
</dbReference>
<dbReference type="GO" id="GO:0001843">
    <property type="term" value="P:neural tube closure"/>
    <property type="evidence" value="ECO:0000266"/>
    <property type="project" value="RGD"/>
</dbReference>
<dbReference type="GO" id="GO:0038061">
    <property type="term" value="P:non-canonical NF-kappaB signal transduction"/>
    <property type="evidence" value="ECO:0000266"/>
    <property type="project" value="RGD"/>
</dbReference>
<dbReference type="GO" id="GO:0042475">
    <property type="term" value="P:odontogenesis of dentin-containing tooth"/>
    <property type="evidence" value="ECO:0000266"/>
    <property type="project" value="RGD"/>
</dbReference>
<dbReference type="GO" id="GO:0001503">
    <property type="term" value="P:ossification"/>
    <property type="evidence" value="ECO:0000266"/>
    <property type="project" value="RGD"/>
</dbReference>
<dbReference type="GO" id="GO:0030316">
    <property type="term" value="P:osteoclast differentiation"/>
    <property type="evidence" value="ECO:0000266"/>
    <property type="project" value="RGD"/>
</dbReference>
<dbReference type="GO" id="GO:0043123">
    <property type="term" value="P:positive regulation of canonical NF-kappaB signal transduction"/>
    <property type="evidence" value="ECO:0000250"/>
    <property type="project" value="UniProtKB"/>
</dbReference>
<dbReference type="GO" id="GO:0032735">
    <property type="term" value="P:positive regulation of interleukin-12 production"/>
    <property type="evidence" value="ECO:0000266"/>
    <property type="project" value="RGD"/>
</dbReference>
<dbReference type="GO" id="GO:0032743">
    <property type="term" value="P:positive regulation of interleukin-2 production"/>
    <property type="evidence" value="ECO:0000266"/>
    <property type="project" value="RGD"/>
</dbReference>
<dbReference type="GO" id="GO:0032755">
    <property type="term" value="P:positive regulation of interleukin-6 production"/>
    <property type="evidence" value="ECO:0000266"/>
    <property type="project" value="RGD"/>
</dbReference>
<dbReference type="GO" id="GO:1904996">
    <property type="term" value="P:positive regulation of leukocyte adhesion to vascular endothelial cell"/>
    <property type="evidence" value="ECO:0000266"/>
    <property type="project" value="RGD"/>
</dbReference>
<dbReference type="GO" id="GO:0031666">
    <property type="term" value="P:positive regulation of lipopolysaccharide-mediated signaling pathway"/>
    <property type="evidence" value="ECO:0000266"/>
    <property type="project" value="RGD"/>
</dbReference>
<dbReference type="GO" id="GO:0051092">
    <property type="term" value="P:positive regulation of NF-kappaB transcription factor activity"/>
    <property type="evidence" value="ECO:0000250"/>
    <property type="project" value="UniProtKB"/>
</dbReference>
<dbReference type="GO" id="GO:0045672">
    <property type="term" value="P:positive regulation of osteoclast differentiation"/>
    <property type="evidence" value="ECO:0000266"/>
    <property type="project" value="RGD"/>
</dbReference>
<dbReference type="GO" id="GO:0048661">
    <property type="term" value="P:positive regulation of smooth muscle cell proliferation"/>
    <property type="evidence" value="ECO:0000315"/>
    <property type="project" value="RGD"/>
</dbReference>
<dbReference type="GO" id="GO:0002726">
    <property type="term" value="P:positive regulation of T cell cytokine production"/>
    <property type="evidence" value="ECO:0000266"/>
    <property type="project" value="RGD"/>
</dbReference>
<dbReference type="GO" id="GO:0042102">
    <property type="term" value="P:positive regulation of T cell proliferation"/>
    <property type="evidence" value="ECO:0000266"/>
    <property type="project" value="RGD"/>
</dbReference>
<dbReference type="GO" id="GO:0045944">
    <property type="term" value="P:positive regulation of transcription by RNA polymerase II"/>
    <property type="evidence" value="ECO:0000266"/>
    <property type="project" value="RGD"/>
</dbReference>
<dbReference type="GO" id="GO:0032481">
    <property type="term" value="P:positive regulation of type I interferon production"/>
    <property type="evidence" value="ECO:0000266"/>
    <property type="project" value="RGD"/>
</dbReference>
<dbReference type="GO" id="GO:0051865">
    <property type="term" value="P:protein autoubiquitination"/>
    <property type="evidence" value="ECO:0000266"/>
    <property type="project" value="RGD"/>
</dbReference>
<dbReference type="GO" id="GO:0141198">
    <property type="term" value="P:protein branched polyubiquitination"/>
    <property type="evidence" value="ECO:0000250"/>
    <property type="project" value="UniProtKB"/>
</dbReference>
<dbReference type="GO" id="GO:0070534">
    <property type="term" value="P:protein K63-linked ubiquitination"/>
    <property type="evidence" value="ECO:0000250"/>
    <property type="project" value="UniProtKB"/>
</dbReference>
<dbReference type="GO" id="GO:0000209">
    <property type="term" value="P:protein polyubiquitination"/>
    <property type="evidence" value="ECO:0000266"/>
    <property type="project" value="RGD"/>
</dbReference>
<dbReference type="GO" id="GO:0016567">
    <property type="term" value="P:protein ubiquitination"/>
    <property type="evidence" value="ECO:0000266"/>
    <property type="project" value="RGD"/>
</dbReference>
<dbReference type="GO" id="GO:0042981">
    <property type="term" value="P:regulation of apoptotic process"/>
    <property type="evidence" value="ECO:0007669"/>
    <property type="project" value="InterPro"/>
</dbReference>
<dbReference type="GO" id="GO:0043122">
    <property type="term" value="P:regulation of canonical NF-kappaB signal transduction"/>
    <property type="evidence" value="ECO:0000318"/>
    <property type="project" value="GO_Central"/>
</dbReference>
<dbReference type="GO" id="GO:0002637">
    <property type="term" value="P:regulation of immunoglobulin production"/>
    <property type="evidence" value="ECO:0000266"/>
    <property type="project" value="RGD"/>
</dbReference>
<dbReference type="GO" id="GO:0098696">
    <property type="term" value="P:regulation of neurotransmitter receptor localization to postsynaptic specialization membrane"/>
    <property type="evidence" value="ECO:0000266"/>
    <property type="project" value="RGD"/>
</dbReference>
<dbReference type="GO" id="GO:0140252">
    <property type="term" value="P:regulation protein catabolic process at postsynapse"/>
    <property type="evidence" value="ECO:0000314"/>
    <property type="project" value="SynGO"/>
</dbReference>
<dbReference type="GO" id="GO:0070555">
    <property type="term" value="P:response to interleukin-1"/>
    <property type="evidence" value="ECO:0000266"/>
    <property type="project" value="RGD"/>
</dbReference>
<dbReference type="GO" id="GO:0002931">
    <property type="term" value="P:response to ischemia"/>
    <property type="evidence" value="ECO:0000270"/>
    <property type="project" value="RGD"/>
</dbReference>
<dbReference type="GO" id="GO:0007165">
    <property type="term" value="P:signal transduction"/>
    <property type="evidence" value="ECO:0000266"/>
    <property type="project" value="RGD"/>
</dbReference>
<dbReference type="GO" id="GO:0007416">
    <property type="term" value="P:synapse assembly"/>
    <property type="evidence" value="ECO:0000314"/>
    <property type="project" value="SynGO"/>
</dbReference>
<dbReference type="GO" id="GO:0050852">
    <property type="term" value="P:T cell receptor signaling pathway"/>
    <property type="evidence" value="ECO:0000266"/>
    <property type="project" value="RGD"/>
</dbReference>
<dbReference type="GO" id="GO:0042088">
    <property type="term" value="P:T-helper 1 type immune response"/>
    <property type="evidence" value="ECO:0000266"/>
    <property type="project" value="RGD"/>
</dbReference>
<dbReference type="GO" id="GO:0034142">
    <property type="term" value="P:toll-like receptor 4 signaling pathway"/>
    <property type="evidence" value="ECO:0000266"/>
    <property type="project" value="RGD"/>
</dbReference>
<dbReference type="CDD" id="cd03776">
    <property type="entry name" value="MATH_TRAF6"/>
    <property type="match status" value="1"/>
</dbReference>
<dbReference type="CDD" id="cd16643">
    <property type="entry name" value="mRING-HC-C3HC3D_TRAF6"/>
    <property type="match status" value="1"/>
</dbReference>
<dbReference type="FunFam" id="2.60.210.10:FF:000010">
    <property type="entry name" value="TNF receptor-associated factor"/>
    <property type="match status" value="1"/>
</dbReference>
<dbReference type="FunFam" id="3.30.40.10:FF:000179">
    <property type="entry name" value="TNF receptor-associated factor"/>
    <property type="match status" value="1"/>
</dbReference>
<dbReference type="FunFam" id="3.30.40.10:FF:000211">
    <property type="entry name" value="TNF receptor-associated factor"/>
    <property type="match status" value="1"/>
</dbReference>
<dbReference type="FunFam" id="3.30.40.10:FF:000289">
    <property type="entry name" value="TNF receptor-associated factor"/>
    <property type="match status" value="1"/>
</dbReference>
<dbReference type="Gene3D" id="2.60.210.10">
    <property type="entry name" value="Apoptosis, Tumor Necrosis Factor Receptor Associated Protein 2, Chain A"/>
    <property type="match status" value="1"/>
</dbReference>
<dbReference type="Gene3D" id="3.30.40.10">
    <property type="entry name" value="Zinc/RING finger domain, C3HC4 (zinc finger)"/>
    <property type="match status" value="3"/>
</dbReference>
<dbReference type="InterPro" id="IPR002083">
    <property type="entry name" value="MATH/TRAF_dom"/>
</dbReference>
<dbReference type="InterPro" id="IPR012227">
    <property type="entry name" value="TNF_rcpt-assoc_TRAF_met"/>
</dbReference>
<dbReference type="InterPro" id="IPR008974">
    <property type="entry name" value="TRAF-like"/>
</dbReference>
<dbReference type="InterPro" id="IPR049342">
    <property type="entry name" value="TRAF1-6_MATH_dom"/>
</dbReference>
<dbReference type="InterPro" id="IPR037309">
    <property type="entry name" value="TRAF6_MATH"/>
</dbReference>
<dbReference type="InterPro" id="IPR027139">
    <property type="entry name" value="TRAF6_RING-HC"/>
</dbReference>
<dbReference type="InterPro" id="IPR041310">
    <property type="entry name" value="TRAF6_Z2"/>
</dbReference>
<dbReference type="InterPro" id="IPR018957">
    <property type="entry name" value="Znf_C3HC4_RING-type"/>
</dbReference>
<dbReference type="InterPro" id="IPR001841">
    <property type="entry name" value="Znf_RING"/>
</dbReference>
<dbReference type="InterPro" id="IPR013083">
    <property type="entry name" value="Znf_RING/FYVE/PHD"/>
</dbReference>
<dbReference type="InterPro" id="IPR017907">
    <property type="entry name" value="Znf_RING_CS"/>
</dbReference>
<dbReference type="InterPro" id="IPR001293">
    <property type="entry name" value="Znf_TRAF"/>
</dbReference>
<dbReference type="PANTHER" id="PTHR10131">
    <property type="entry name" value="TNF RECEPTOR ASSOCIATED FACTOR"/>
    <property type="match status" value="1"/>
</dbReference>
<dbReference type="PANTHER" id="PTHR10131:SF152">
    <property type="entry name" value="TNF RECEPTOR-ASSOCIATED FACTOR 6"/>
    <property type="match status" value="1"/>
</dbReference>
<dbReference type="Pfam" id="PF21355">
    <property type="entry name" value="TRAF-mep_MATH"/>
    <property type="match status" value="1"/>
</dbReference>
<dbReference type="Pfam" id="PF18048">
    <property type="entry name" value="TRAF6_Z2"/>
    <property type="match status" value="1"/>
</dbReference>
<dbReference type="Pfam" id="PF00097">
    <property type="entry name" value="zf-C3HC4"/>
    <property type="match status" value="1"/>
</dbReference>
<dbReference type="Pfam" id="PF02176">
    <property type="entry name" value="zf-TRAF"/>
    <property type="match status" value="1"/>
</dbReference>
<dbReference type="PIRSF" id="PIRSF015614">
    <property type="entry name" value="TRAF"/>
    <property type="match status" value="1"/>
</dbReference>
<dbReference type="SMART" id="SM00061">
    <property type="entry name" value="MATH"/>
    <property type="match status" value="1"/>
</dbReference>
<dbReference type="SMART" id="SM00184">
    <property type="entry name" value="RING"/>
    <property type="match status" value="1"/>
</dbReference>
<dbReference type="SUPFAM" id="SSF57850">
    <property type="entry name" value="RING/U-box"/>
    <property type="match status" value="1"/>
</dbReference>
<dbReference type="SUPFAM" id="SSF49599">
    <property type="entry name" value="TRAF domain-like"/>
    <property type="match status" value="3"/>
</dbReference>
<dbReference type="PROSITE" id="PS50144">
    <property type="entry name" value="MATH"/>
    <property type="match status" value="1"/>
</dbReference>
<dbReference type="PROSITE" id="PS00518">
    <property type="entry name" value="ZF_RING_1"/>
    <property type="match status" value="1"/>
</dbReference>
<dbReference type="PROSITE" id="PS50089">
    <property type="entry name" value="ZF_RING_2"/>
    <property type="match status" value="1"/>
</dbReference>
<dbReference type="PROSITE" id="PS50145">
    <property type="entry name" value="ZF_TRAF"/>
    <property type="match status" value="2"/>
</dbReference>